<reference key="1">
    <citation type="journal article" date="2006" name="J. Bacteriol.">
        <title>Complete genome sequence of Yersinia pestis strains Antiqua and Nepal516: evidence of gene reduction in an emerging pathogen.</title>
        <authorList>
            <person name="Chain P.S.G."/>
            <person name="Hu P."/>
            <person name="Malfatti S.A."/>
            <person name="Radnedge L."/>
            <person name="Larimer F."/>
            <person name="Vergez L.M."/>
            <person name="Worsham P."/>
            <person name="Chu M.C."/>
            <person name="Andersen G.L."/>
        </authorList>
    </citation>
    <scope>NUCLEOTIDE SEQUENCE [LARGE SCALE GENOMIC DNA]</scope>
    <source>
        <strain>Nepal516</strain>
    </source>
</reference>
<reference key="2">
    <citation type="submission" date="2009-04" db="EMBL/GenBank/DDBJ databases">
        <title>Yersinia pestis Nepal516A whole genome shotgun sequencing project.</title>
        <authorList>
            <person name="Plunkett G. III"/>
            <person name="Anderson B.D."/>
            <person name="Baumler D.J."/>
            <person name="Burland V."/>
            <person name="Cabot E.L."/>
            <person name="Glasner J.D."/>
            <person name="Mau B."/>
            <person name="Neeno-Eckwall E."/>
            <person name="Perna N.T."/>
            <person name="Munk A.C."/>
            <person name="Tapia R."/>
            <person name="Green L.D."/>
            <person name="Rogers Y.C."/>
            <person name="Detter J.C."/>
            <person name="Bruce D.C."/>
            <person name="Brettin T.S."/>
        </authorList>
    </citation>
    <scope>NUCLEOTIDE SEQUENCE [LARGE SCALE GENOMIC DNA]</scope>
    <source>
        <strain>Nepal516</strain>
    </source>
</reference>
<organism>
    <name type="scientific">Yersinia pestis bv. Antiqua (strain Nepal516)</name>
    <dbReference type="NCBI Taxonomy" id="377628"/>
    <lineage>
        <taxon>Bacteria</taxon>
        <taxon>Pseudomonadati</taxon>
        <taxon>Pseudomonadota</taxon>
        <taxon>Gammaproteobacteria</taxon>
        <taxon>Enterobacterales</taxon>
        <taxon>Yersiniaceae</taxon>
        <taxon>Yersinia</taxon>
    </lineage>
</organism>
<feature type="chain" id="PRO_1000067094" description="Chitooligosaccharide deacetylase">
    <location>
        <begin position="1"/>
        <end position="253"/>
    </location>
</feature>
<feature type="binding site" evidence="1">
    <location>
        <position position="61"/>
    </location>
    <ligand>
        <name>Mg(2+)</name>
        <dbReference type="ChEBI" id="CHEBI:18420"/>
    </ligand>
</feature>
<feature type="binding site" evidence="1">
    <location>
        <position position="126"/>
    </location>
    <ligand>
        <name>Mg(2+)</name>
        <dbReference type="ChEBI" id="CHEBI:18420"/>
    </ligand>
</feature>
<protein>
    <recommendedName>
        <fullName evidence="1">Chitooligosaccharide deacetylase</fullName>
        <shortName evidence="1">COD</shortName>
        <ecNumber evidence="1">3.5.1.105</ecNumber>
    </recommendedName>
    <alternativeName>
        <fullName evidence="1">Chitin disaccharide deacetylase</fullName>
    </alternativeName>
    <alternativeName>
        <fullName evidence="1">Chitobiose deacetylase</fullName>
    </alternativeName>
    <alternativeName>
        <fullName evidence="1">Chitobiose-6P deacetylase</fullName>
    </alternativeName>
    <alternativeName>
        <fullName evidence="1">Chitotriose deacetylase</fullName>
    </alternativeName>
    <alternativeName>
        <fullName evidence="1">Chitotriose-6P deacetylase</fullName>
    </alternativeName>
</protein>
<evidence type="ECO:0000255" key="1">
    <source>
        <dbReference type="HAMAP-Rule" id="MF_01246"/>
    </source>
</evidence>
<proteinExistence type="inferred from homology"/>
<name>CHBG_YERPN</name>
<sequence length="253" mass="28171">MEKLLIVNADDFGLCKGQNYGIIDAFRNGVVSSTTAMMNSVDINHAAELSAQYPALPVGMHFVLTFGRPLTAMPSLTDANGELGKWLWQRAGAGTLDLNEIAQELECQFERFSAVFGRPPTHIDSHHHVHMLPQIYPLVAAFAREKSLPLRIDRHEVQQHGLTLDNPRSSEWFNAGFYGENLSEPSFLQLLEHADQQGVNSLEIMCHPAFIDQTLMTSGYCYPRLTELAILTSPTLKPAIAQRGYRLGSFLDC</sequence>
<dbReference type="EC" id="3.5.1.105" evidence="1"/>
<dbReference type="EMBL" id="CP000305">
    <property type="protein sequence ID" value="ABG17498.1"/>
    <property type="molecule type" value="Genomic_DNA"/>
</dbReference>
<dbReference type="EMBL" id="ACNQ01000008">
    <property type="protein sequence ID" value="EEO77601.1"/>
    <property type="molecule type" value="Genomic_DNA"/>
</dbReference>
<dbReference type="RefSeq" id="WP_002212244.1">
    <property type="nucleotide sequence ID" value="NZ_ACNQ01000008.1"/>
</dbReference>
<dbReference type="SMR" id="Q1CKI2"/>
<dbReference type="GeneID" id="57976011"/>
<dbReference type="KEGG" id="ypn:YPN_1168"/>
<dbReference type="HOGENOM" id="CLU_064244_4_1_6"/>
<dbReference type="UniPathway" id="UPA00349"/>
<dbReference type="Proteomes" id="UP000008936">
    <property type="component" value="Chromosome"/>
</dbReference>
<dbReference type="GO" id="GO:0005737">
    <property type="term" value="C:cytoplasm"/>
    <property type="evidence" value="ECO:0007669"/>
    <property type="project" value="UniProtKB-SubCell"/>
</dbReference>
<dbReference type="GO" id="GO:0036311">
    <property type="term" value="F:chitin disaccharide deacetylase activity"/>
    <property type="evidence" value="ECO:0007669"/>
    <property type="project" value="UniProtKB-UniRule"/>
</dbReference>
<dbReference type="GO" id="GO:0019213">
    <property type="term" value="F:deacetylase activity"/>
    <property type="evidence" value="ECO:0007669"/>
    <property type="project" value="TreeGrafter"/>
</dbReference>
<dbReference type="GO" id="GO:0046872">
    <property type="term" value="F:metal ion binding"/>
    <property type="evidence" value="ECO:0007669"/>
    <property type="project" value="UniProtKB-KW"/>
</dbReference>
<dbReference type="GO" id="GO:0006032">
    <property type="term" value="P:chitin catabolic process"/>
    <property type="evidence" value="ECO:0007669"/>
    <property type="project" value="UniProtKB-UniPathway"/>
</dbReference>
<dbReference type="GO" id="GO:0052777">
    <property type="term" value="P:diacetylchitobiose catabolic process"/>
    <property type="evidence" value="ECO:0007669"/>
    <property type="project" value="UniProtKB-UniRule"/>
</dbReference>
<dbReference type="GO" id="GO:0000272">
    <property type="term" value="P:polysaccharide catabolic process"/>
    <property type="evidence" value="ECO:0007669"/>
    <property type="project" value="UniProtKB-UniRule"/>
</dbReference>
<dbReference type="CDD" id="cd10803">
    <property type="entry name" value="YdjC_EF3048_like"/>
    <property type="match status" value="1"/>
</dbReference>
<dbReference type="FunFam" id="3.20.20.370:FF:000001">
    <property type="entry name" value="Chitooligosaccharide deacetylase"/>
    <property type="match status" value="1"/>
</dbReference>
<dbReference type="Gene3D" id="3.20.20.370">
    <property type="entry name" value="Glycoside hydrolase/deacetylase"/>
    <property type="match status" value="1"/>
</dbReference>
<dbReference type="HAMAP" id="MF_01246">
    <property type="entry name" value="COD"/>
    <property type="match status" value="1"/>
</dbReference>
<dbReference type="InterPro" id="IPR022948">
    <property type="entry name" value="COD_ChbG_bac"/>
</dbReference>
<dbReference type="InterPro" id="IPR011330">
    <property type="entry name" value="Glyco_hydro/deAcase_b/a-brl"/>
</dbReference>
<dbReference type="InterPro" id="IPR006879">
    <property type="entry name" value="YdjC-like"/>
</dbReference>
<dbReference type="NCBIfam" id="NF002559">
    <property type="entry name" value="PRK02134.1"/>
    <property type="match status" value="1"/>
</dbReference>
<dbReference type="PANTHER" id="PTHR31609:SF1">
    <property type="entry name" value="CARBOHYDRATE DEACETYLASE"/>
    <property type="match status" value="1"/>
</dbReference>
<dbReference type="PANTHER" id="PTHR31609">
    <property type="entry name" value="YDJC DEACETYLASE FAMILY MEMBER"/>
    <property type="match status" value="1"/>
</dbReference>
<dbReference type="Pfam" id="PF04794">
    <property type="entry name" value="YdjC"/>
    <property type="match status" value="1"/>
</dbReference>
<dbReference type="SUPFAM" id="SSF88713">
    <property type="entry name" value="Glycoside hydrolase/deacetylase"/>
    <property type="match status" value="1"/>
</dbReference>
<comment type="function">
    <text evidence="1">Involved in the degradation of chitin. ChbG is essential for growth on the acetylated chitooligosaccharides chitobiose and chitotriose but is dispensable for growth on cellobiose and chitosan dimer, the deacetylated form of chitobiose. Deacetylation of chitobiose-6-P and chitotriose-6-P is necessary for both the activation of the chb promoter by the regulatory protein ChbR and the hydrolysis of phosphorylated beta-glucosides by the phospho-beta-glucosidase ChbF. Catalyzes the removal of only one acetyl group from chitobiose-6-P to yield monoacetylchitobiose-6-P, the inducer of ChbR and the substrate of ChbF.</text>
</comment>
<comment type="catalytic activity">
    <reaction evidence="1">
        <text>N,N'-diacetylchitobiose + H2O = N-acetyl-beta-D-glucosaminyl-(1-&gt;4)-D-glucosamine + acetate</text>
        <dbReference type="Rhea" id="RHEA:27469"/>
        <dbReference type="ChEBI" id="CHEBI:15377"/>
        <dbReference type="ChEBI" id="CHEBI:28681"/>
        <dbReference type="ChEBI" id="CHEBI:30089"/>
        <dbReference type="ChEBI" id="CHEBI:59910"/>
        <dbReference type="EC" id="3.5.1.105"/>
    </reaction>
</comment>
<comment type="catalytic activity">
    <reaction evidence="1">
        <text>diacetylchitobiose-6'-phosphate + H2O = N'-monoacetylchitobiose-6'-phosphate + acetate</text>
        <dbReference type="Rhea" id="RHEA:35083"/>
        <dbReference type="ChEBI" id="CHEBI:15377"/>
        <dbReference type="ChEBI" id="CHEBI:30089"/>
        <dbReference type="ChEBI" id="CHEBI:64883"/>
        <dbReference type="ChEBI" id="CHEBI:71315"/>
    </reaction>
</comment>
<comment type="cofactor">
    <cofactor evidence="1">
        <name>Mg(2+)</name>
        <dbReference type="ChEBI" id="CHEBI:18420"/>
    </cofactor>
</comment>
<comment type="pathway">
    <text evidence="1">Glycan degradation; chitin degradation.</text>
</comment>
<comment type="subunit">
    <text evidence="1">Homodimer.</text>
</comment>
<comment type="subcellular location">
    <subcellularLocation>
        <location evidence="1">Cytoplasm</location>
    </subcellularLocation>
</comment>
<comment type="similarity">
    <text evidence="1">Belongs to the YdjC deacetylase family. ChbG subfamily.</text>
</comment>
<keyword id="KW-0119">Carbohydrate metabolism</keyword>
<keyword id="KW-0146">Chitin degradation</keyword>
<keyword id="KW-0963">Cytoplasm</keyword>
<keyword id="KW-0378">Hydrolase</keyword>
<keyword id="KW-0460">Magnesium</keyword>
<keyword id="KW-0479">Metal-binding</keyword>
<keyword id="KW-0624">Polysaccharide degradation</keyword>
<gene>
    <name evidence="1" type="primary">chbG</name>
    <name type="ordered locus">YPN_1168</name>
    <name type="ORF">YP516_1278</name>
</gene>
<accession>Q1CKI2</accession>
<accession>C4GRB0</accession>